<feature type="chain" id="PRO_0000108070" description="Uncharacterized protein C4C5.01">
    <location>
        <begin position="1"/>
        <end position="249"/>
    </location>
</feature>
<keyword id="KW-1185">Reference proteome</keyword>
<evidence type="ECO:0000305" key="1"/>
<comment type="similarity">
    <text evidence="1">Belongs to the HAD-like hydrolase superfamily. CbbY/CbbZ/Gph/YieH family.</text>
</comment>
<organism>
    <name type="scientific">Schizosaccharomyces pombe (strain 972 / ATCC 24843)</name>
    <name type="common">Fission yeast</name>
    <dbReference type="NCBI Taxonomy" id="284812"/>
    <lineage>
        <taxon>Eukaryota</taxon>
        <taxon>Fungi</taxon>
        <taxon>Dikarya</taxon>
        <taxon>Ascomycota</taxon>
        <taxon>Taphrinomycotina</taxon>
        <taxon>Schizosaccharomycetes</taxon>
        <taxon>Schizosaccharomycetales</taxon>
        <taxon>Schizosaccharomycetaceae</taxon>
        <taxon>Schizosaccharomyces</taxon>
    </lineage>
</organism>
<reference key="1">
    <citation type="journal article" date="2002" name="Nature">
        <title>The genome sequence of Schizosaccharomyces pombe.</title>
        <authorList>
            <person name="Wood V."/>
            <person name="Gwilliam R."/>
            <person name="Rajandream M.A."/>
            <person name="Lyne M.H."/>
            <person name="Lyne R."/>
            <person name="Stewart A."/>
            <person name="Sgouros J.G."/>
            <person name="Peat N."/>
            <person name="Hayles J."/>
            <person name="Baker S.G."/>
            <person name="Basham D."/>
            <person name="Bowman S."/>
            <person name="Brooks K."/>
            <person name="Brown D."/>
            <person name="Brown S."/>
            <person name="Chillingworth T."/>
            <person name="Churcher C.M."/>
            <person name="Collins M."/>
            <person name="Connor R."/>
            <person name="Cronin A."/>
            <person name="Davis P."/>
            <person name="Feltwell T."/>
            <person name="Fraser A."/>
            <person name="Gentles S."/>
            <person name="Goble A."/>
            <person name="Hamlin N."/>
            <person name="Harris D.E."/>
            <person name="Hidalgo J."/>
            <person name="Hodgson G."/>
            <person name="Holroyd S."/>
            <person name="Hornsby T."/>
            <person name="Howarth S."/>
            <person name="Huckle E.J."/>
            <person name="Hunt S."/>
            <person name="Jagels K."/>
            <person name="James K.D."/>
            <person name="Jones L."/>
            <person name="Jones M."/>
            <person name="Leather S."/>
            <person name="McDonald S."/>
            <person name="McLean J."/>
            <person name="Mooney P."/>
            <person name="Moule S."/>
            <person name="Mungall K.L."/>
            <person name="Murphy L.D."/>
            <person name="Niblett D."/>
            <person name="Odell C."/>
            <person name="Oliver K."/>
            <person name="O'Neil S."/>
            <person name="Pearson D."/>
            <person name="Quail M.A."/>
            <person name="Rabbinowitsch E."/>
            <person name="Rutherford K.M."/>
            <person name="Rutter S."/>
            <person name="Saunders D."/>
            <person name="Seeger K."/>
            <person name="Sharp S."/>
            <person name="Skelton J."/>
            <person name="Simmonds M.N."/>
            <person name="Squares R."/>
            <person name="Squares S."/>
            <person name="Stevens K."/>
            <person name="Taylor K."/>
            <person name="Taylor R.G."/>
            <person name="Tivey A."/>
            <person name="Walsh S.V."/>
            <person name="Warren T."/>
            <person name="Whitehead S."/>
            <person name="Woodward J.R."/>
            <person name="Volckaert G."/>
            <person name="Aert R."/>
            <person name="Robben J."/>
            <person name="Grymonprez B."/>
            <person name="Weltjens I."/>
            <person name="Vanstreels E."/>
            <person name="Rieger M."/>
            <person name="Schaefer M."/>
            <person name="Mueller-Auer S."/>
            <person name="Gabel C."/>
            <person name="Fuchs M."/>
            <person name="Duesterhoeft A."/>
            <person name="Fritzc C."/>
            <person name="Holzer E."/>
            <person name="Moestl D."/>
            <person name="Hilbert H."/>
            <person name="Borzym K."/>
            <person name="Langer I."/>
            <person name="Beck A."/>
            <person name="Lehrach H."/>
            <person name="Reinhardt R."/>
            <person name="Pohl T.M."/>
            <person name="Eger P."/>
            <person name="Zimmermann W."/>
            <person name="Wedler H."/>
            <person name="Wambutt R."/>
            <person name="Purnelle B."/>
            <person name="Goffeau A."/>
            <person name="Cadieu E."/>
            <person name="Dreano S."/>
            <person name="Gloux S."/>
            <person name="Lelaure V."/>
            <person name="Mottier S."/>
            <person name="Galibert F."/>
            <person name="Aves S.J."/>
            <person name="Xiang Z."/>
            <person name="Hunt C."/>
            <person name="Moore K."/>
            <person name="Hurst S.M."/>
            <person name="Lucas M."/>
            <person name="Rochet M."/>
            <person name="Gaillardin C."/>
            <person name="Tallada V.A."/>
            <person name="Garzon A."/>
            <person name="Thode G."/>
            <person name="Daga R.R."/>
            <person name="Cruzado L."/>
            <person name="Jimenez J."/>
            <person name="Sanchez M."/>
            <person name="del Rey F."/>
            <person name="Benito J."/>
            <person name="Dominguez A."/>
            <person name="Revuelta J.L."/>
            <person name="Moreno S."/>
            <person name="Armstrong J."/>
            <person name="Forsburg S.L."/>
            <person name="Cerutti L."/>
            <person name="Lowe T."/>
            <person name="McCombie W.R."/>
            <person name="Paulsen I."/>
            <person name="Potashkin J."/>
            <person name="Shpakovski G.V."/>
            <person name="Ussery D."/>
            <person name="Barrell B.G."/>
            <person name="Nurse P."/>
        </authorList>
    </citation>
    <scope>NUCLEOTIDE SEQUENCE [LARGE SCALE GENOMIC DNA]</scope>
    <source>
        <strain>972 / ATCC 24843</strain>
    </source>
</reference>
<dbReference type="EMBL" id="CU329670">
    <property type="protein sequence ID" value="CAB11172.2"/>
    <property type="molecule type" value="Genomic_DNA"/>
</dbReference>
<dbReference type="PIR" id="T38787">
    <property type="entry name" value="T38787"/>
</dbReference>
<dbReference type="SMR" id="O14165"/>
<dbReference type="BioGRID" id="279945">
    <property type="interactions" value="24"/>
</dbReference>
<dbReference type="FunCoup" id="O14165">
    <property type="interactions" value="38"/>
</dbReference>
<dbReference type="STRING" id="284812.O14165"/>
<dbReference type="iPTMnet" id="O14165"/>
<dbReference type="PaxDb" id="4896-SPAC4C5.01.1"/>
<dbReference type="EnsemblFungi" id="SPAC4C5.01.1">
    <property type="protein sequence ID" value="SPAC4C5.01.1:pep"/>
    <property type="gene ID" value="SPAC4C5.01"/>
</dbReference>
<dbReference type="KEGG" id="spo:2543527"/>
<dbReference type="PomBase" id="SPAC4C5.01"/>
<dbReference type="VEuPathDB" id="FungiDB:SPAC4C5.01"/>
<dbReference type="eggNOG" id="KOG2914">
    <property type="taxonomic scope" value="Eukaryota"/>
</dbReference>
<dbReference type="HOGENOM" id="CLU_045011_13_0_1"/>
<dbReference type="InParanoid" id="O14165"/>
<dbReference type="OMA" id="PEMSDSK"/>
<dbReference type="PhylomeDB" id="O14165"/>
<dbReference type="PRO" id="PR:O14165"/>
<dbReference type="Proteomes" id="UP000002485">
    <property type="component" value="Chromosome I"/>
</dbReference>
<dbReference type="GO" id="GO:0005829">
    <property type="term" value="C:cytosol"/>
    <property type="evidence" value="ECO:0007005"/>
    <property type="project" value="PomBase"/>
</dbReference>
<dbReference type="GO" id="GO:0005739">
    <property type="term" value="C:mitochondrion"/>
    <property type="evidence" value="ECO:0007005"/>
    <property type="project" value="PomBase"/>
</dbReference>
<dbReference type="GO" id="GO:0005634">
    <property type="term" value="C:nucleus"/>
    <property type="evidence" value="ECO:0007005"/>
    <property type="project" value="PomBase"/>
</dbReference>
<dbReference type="GO" id="GO:0016791">
    <property type="term" value="F:phosphatase activity"/>
    <property type="evidence" value="ECO:0000318"/>
    <property type="project" value="GO_Central"/>
</dbReference>
<dbReference type="GO" id="GO:1990738">
    <property type="term" value="F:pseudouridine 5'-phosphatase activity"/>
    <property type="evidence" value="ECO:0000266"/>
    <property type="project" value="PomBase"/>
</dbReference>
<dbReference type="GO" id="GO:0043097">
    <property type="term" value="P:pyrimidine nucleoside salvage"/>
    <property type="evidence" value="ECO:0000250"/>
    <property type="project" value="PomBase"/>
</dbReference>
<dbReference type="GO" id="GO:0016075">
    <property type="term" value="P:rRNA catabolic process"/>
    <property type="evidence" value="ECO:0000266"/>
    <property type="project" value="PomBase"/>
</dbReference>
<dbReference type="CDD" id="cd07529">
    <property type="entry name" value="HAD_AtGPP-like"/>
    <property type="match status" value="1"/>
</dbReference>
<dbReference type="FunFam" id="1.10.150.240:FF:000001">
    <property type="entry name" value="Haloacid dehalogenase-like hydrolase domain"/>
    <property type="match status" value="1"/>
</dbReference>
<dbReference type="Gene3D" id="3.40.50.1000">
    <property type="entry name" value="HAD superfamily/HAD-like"/>
    <property type="match status" value="1"/>
</dbReference>
<dbReference type="Gene3D" id="1.10.150.240">
    <property type="entry name" value="Putative phosphatase, domain 2"/>
    <property type="match status" value="1"/>
</dbReference>
<dbReference type="InterPro" id="IPR045228">
    <property type="entry name" value="Gpp1/Gpp2-like"/>
</dbReference>
<dbReference type="InterPro" id="IPR036412">
    <property type="entry name" value="HAD-like_sf"/>
</dbReference>
<dbReference type="InterPro" id="IPR006439">
    <property type="entry name" value="HAD-SF_hydro_IA"/>
</dbReference>
<dbReference type="InterPro" id="IPR023214">
    <property type="entry name" value="HAD_sf"/>
</dbReference>
<dbReference type="InterPro" id="IPR023198">
    <property type="entry name" value="PGP-like_dom2"/>
</dbReference>
<dbReference type="NCBIfam" id="TIGR01509">
    <property type="entry name" value="HAD-SF-IA-v3"/>
    <property type="match status" value="1"/>
</dbReference>
<dbReference type="PANTHER" id="PTHR18901">
    <property type="entry name" value="2-DEOXYGLUCOSE-6-PHOSPHATE PHOSPHATASE 2"/>
    <property type="match status" value="1"/>
</dbReference>
<dbReference type="PANTHER" id="PTHR18901:SF46">
    <property type="entry name" value="HALOACID DEHALOGENASE-LIKE HYDROLASE"/>
    <property type="match status" value="1"/>
</dbReference>
<dbReference type="Pfam" id="PF00702">
    <property type="entry name" value="Hydrolase"/>
    <property type="match status" value="1"/>
</dbReference>
<dbReference type="SFLD" id="SFLDG01129">
    <property type="entry name" value="C1.5:_HAD__Beta-PGM__Phosphata"/>
    <property type="match status" value="1"/>
</dbReference>
<dbReference type="SFLD" id="SFLDS00003">
    <property type="entry name" value="Haloacid_Dehalogenase"/>
    <property type="match status" value="1"/>
</dbReference>
<dbReference type="SUPFAM" id="SSF56784">
    <property type="entry name" value="HAD-like"/>
    <property type="match status" value="1"/>
</dbReference>
<name>YDX1_SCHPO</name>
<protein>
    <recommendedName>
        <fullName>Uncharacterized protein C4C5.01</fullName>
    </recommendedName>
</protein>
<proteinExistence type="inferred from homology"/>
<accession>O14165</accession>
<gene>
    <name type="ORF">SPAC4C5.01</name>
</gene>
<sequence>MAAKHVKYMACLFDMDGLLVDSETIYTKTTNLILDRYGKDPLPISVKAQMMGRPGSAAAKVVIDWSNIPMTPQQFVDEQQVIRAKFWSSLKPMPGAESLINNLSNHGIDIGLATSSNTANYNMKTAHLKHIFEKFGKNVITGDNPSIAPGRGKPFPDIWLKVLNLINESRKQRGLKALTPSQCIAFEDSIPGVKSAKAAGMHVIWVPDAAIKNLVGDQLNEIVDSQCETLPSLSEFDINKYLNINSKQA</sequence>